<keyword id="KW-0040">ANK repeat</keyword>
<keyword id="KW-1185">Reference proteome</keyword>
<keyword id="KW-0677">Repeat</keyword>
<organism>
    <name type="scientific">Fowlpox virus (strain NVSL)</name>
    <name type="common">FPV</name>
    <dbReference type="NCBI Taxonomy" id="928301"/>
    <lineage>
        <taxon>Viruses</taxon>
        <taxon>Varidnaviria</taxon>
        <taxon>Bamfordvirae</taxon>
        <taxon>Nucleocytoviricota</taxon>
        <taxon>Pokkesviricetes</taxon>
        <taxon>Chitovirales</taxon>
        <taxon>Poxviridae</taxon>
        <taxon>Chordopoxvirinae</taxon>
        <taxon>Avipoxvirus</taxon>
        <taxon>Fowlpox virus</taxon>
    </lineage>
</organism>
<feature type="chain" id="PRO_0000067106" description="Putative ankyrin repeat protein FPV023">
    <location>
        <begin position="1"/>
        <end position="434"/>
    </location>
</feature>
<feature type="repeat" description="ANK 1">
    <location>
        <begin position="33"/>
        <end position="62"/>
    </location>
</feature>
<feature type="repeat" description="ANK 2">
    <location>
        <begin position="134"/>
        <end position="163"/>
    </location>
</feature>
<feature type="repeat" description="ANK 3">
    <location>
        <begin position="167"/>
        <end position="197"/>
    </location>
</feature>
<feature type="repeat" description="ANK 4">
    <location>
        <begin position="201"/>
        <end position="230"/>
    </location>
</feature>
<feature type="repeat" description="ANK 5">
    <location>
        <begin position="236"/>
        <end position="265"/>
    </location>
</feature>
<feature type="repeat" description="ANK 6">
    <location>
        <begin position="269"/>
        <end position="299"/>
    </location>
</feature>
<feature type="repeat" description="ANK 7">
    <location>
        <begin position="303"/>
        <end position="330"/>
    </location>
</feature>
<protein>
    <recommendedName>
        <fullName>Putative ankyrin repeat protein FPV023</fullName>
    </recommendedName>
</protein>
<sequence length="434" mass="48885">MDYTKITRYTTGIDSILYKLIENCIDLRPTTYRLKILLHKAIELRNIEAVRLLLNNDVDPVAIDTHGITSLHTLTMPPNSSFIELDNWCSNTYTELLEVINRLNKSKTSYSFQRVELMRMIMDYCKDDEISKCLTISRMEPSRQIEEIQIMDILLSKGIDINFKDDIGNTALHYACDYRNGLNMVRHLIKNGADINIENDYGTTPLACAVSTRNIELVSILLDSGADPNSSSSSSIGTKVLHTAVGSGNFNIAKELIESGADPNIGDKAGVTPLHVAAIDEDSYALLELLLDNGADPNIKCSNGTTPLFQAMHNYNRVKLLFMYGADINIIDNQGNTPFTNLMSYDNEKLNSIIILQIMLIRKLFNDKMYYPAGLIKNLECIESHENLMNMAKRCEKLIKNKKSKDIVPDRISSELLDEEYDLDGWRSTSCSIS</sequence>
<accession>Q9J5H8</accession>
<gene>
    <name type="ordered locus">FPV023</name>
</gene>
<proteinExistence type="predicted"/>
<reference key="1">
    <citation type="journal article" date="2000" name="J. Virol.">
        <title>The genome of fowlpox virus.</title>
        <authorList>
            <person name="Afonso C.L."/>
            <person name="Tulman E.R."/>
            <person name="Lu Z."/>
            <person name="Zsak L."/>
            <person name="Kutish G.F."/>
            <person name="Rock D.L."/>
        </authorList>
    </citation>
    <scope>NUCLEOTIDE SEQUENCE [LARGE SCALE GENOMIC DNA]</scope>
</reference>
<name>V023_FOWPN</name>
<organismHost>
    <name type="scientific">Vertebrata</name>
    <dbReference type="NCBI Taxonomy" id="7742"/>
</organismHost>
<dbReference type="EMBL" id="AF198100">
    <property type="protein sequence ID" value="AAF44367.1"/>
    <property type="molecule type" value="Genomic_DNA"/>
</dbReference>
<dbReference type="RefSeq" id="NP_038986.1">
    <property type="nucleotide sequence ID" value="NC_002188.1"/>
</dbReference>
<dbReference type="SMR" id="Q9J5H8"/>
<dbReference type="GeneID" id="1486742"/>
<dbReference type="KEGG" id="vg:1486742"/>
<dbReference type="Proteomes" id="UP000008597">
    <property type="component" value="Segment"/>
</dbReference>
<dbReference type="Gene3D" id="1.25.40.20">
    <property type="entry name" value="Ankyrin repeat-containing domain"/>
    <property type="match status" value="3"/>
</dbReference>
<dbReference type="InterPro" id="IPR002110">
    <property type="entry name" value="Ankyrin_rpt"/>
</dbReference>
<dbReference type="InterPro" id="IPR036770">
    <property type="entry name" value="Ankyrin_rpt-contain_sf"/>
</dbReference>
<dbReference type="PANTHER" id="PTHR24178">
    <property type="entry name" value="MOLTING PROTEIN MLT-4"/>
    <property type="match status" value="1"/>
</dbReference>
<dbReference type="Pfam" id="PF00023">
    <property type="entry name" value="Ank"/>
    <property type="match status" value="1"/>
</dbReference>
<dbReference type="Pfam" id="PF12796">
    <property type="entry name" value="Ank_2"/>
    <property type="match status" value="2"/>
</dbReference>
<dbReference type="PRINTS" id="PR01415">
    <property type="entry name" value="ANKYRIN"/>
</dbReference>
<dbReference type="SMART" id="SM00248">
    <property type="entry name" value="ANK"/>
    <property type="match status" value="6"/>
</dbReference>
<dbReference type="SUPFAM" id="SSF48403">
    <property type="entry name" value="Ankyrin repeat"/>
    <property type="match status" value="2"/>
</dbReference>
<dbReference type="PROSITE" id="PS50297">
    <property type="entry name" value="ANK_REP_REGION"/>
    <property type="match status" value="1"/>
</dbReference>
<dbReference type="PROSITE" id="PS50088">
    <property type="entry name" value="ANK_REPEAT"/>
    <property type="match status" value="4"/>
</dbReference>